<feature type="chain" id="PRO_0000120753" description="Importin-8">
    <location>
        <begin position="1"/>
        <end position="1010"/>
    </location>
</feature>
<feature type="domain" description="Importin N-terminal" evidence="3">
    <location>
        <begin position="22"/>
        <end position="102"/>
    </location>
</feature>
<feature type="region of interest" description="Disordered" evidence="4">
    <location>
        <begin position="886"/>
        <end position="932"/>
    </location>
</feature>
<feature type="compositionally biased region" description="Basic and acidic residues" evidence="4">
    <location>
        <begin position="886"/>
        <end position="895"/>
    </location>
</feature>
<feature type="compositionally biased region" description="Acidic residues" evidence="4">
    <location>
        <begin position="896"/>
        <end position="909"/>
    </location>
</feature>
<feature type="compositionally biased region" description="Polar residues" evidence="4">
    <location>
        <begin position="910"/>
        <end position="921"/>
    </location>
</feature>
<feature type="modified residue" description="Phosphoserine" evidence="2">
    <location>
        <position position="902"/>
    </location>
</feature>
<feature type="modified residue" description="Phosphoserine" evidence="2">
    <location>
        <position position="903"/>
    </location>
</feature>
<feature type="splice variant" id="VSP_009656" description="In isoform 2." evidence="7">
    <location>
        <begin position="304"/>
        <end position="347"/>
    </location>
</feature>
<feature type="sequence conflict" description="In Ref. 3; AAH44819/AAH54373." evidence="8" ref="3">
    <original>R</original>
    <variation>K</variation>
    <location>
        <position position="405"/>
    </location>
</feature>
<keyword id="KW-0025">Alternative splicing</keyword>
<keyword id="KW-0963">Cytoplasm</keyword>
<keyword id="KW-0539">Nucleus</keyword>
<keyword id="KW-0597">Phosphoprotein</keyword>
<keyword id="KW-0653">Protein transport</keyword>
<keyword id="KW-1185">Reference proteome</keyword>
<keyword id="KW-0813">Transport</keyword>
<dbReference type="EMBL" id="CU302294">
    <property type="status" value="NOT_ANNOTATED_CDS"/>
    <property type="molecule type" value="Genomic_DNA"/>
</dbReference>
<dbReference type="EMBL" id="CH466572">
    <property type="protein sequence ID" value="EDL10748.1"/>
    <property type="molecule type" value="Genomic_DNA"/>
</dbReference>
<dbReference type="EMBL" id="BC024474">
    <property type="protein sequence ID" value="AAH24474.1"/>
    <property type="molecule type" value="mRNA"/>
</dbReference>
<dbReference type="EMBL" id="BC027360">
    <property type="protein sequence ID" value="AAH27360.1"/>
    <property type="molecule type" value="mRNA"/>
</dbReference>
<dbReference type="EMBL" id="BC044819">
    <property type="protein sequence ID" value="AAH44819.1"/>
    <property type="molecule type" value="mRNA"/>
</dbReference>
<dbReference type="EMBL" id="BC054373">
    <property type="protein sequence ID" value="AAH54373.1"/>
    <property type="molecule type" value="mRNA"/>
</dbReference>
<dbReference type="EMBL" id="BC151036">
    <property type="protein sequence ID" value="AAI51037.1"/>
    <property type="molecule type" value="mRNA"/>
</dbReference>
<dbReference type="EMBL" id="BC151052">
    <property type="protein sequence ID" value="AAI51053.1"/>
    <property type="molecule type" value="mRNA"/>
</dbReference>
<dbReference type="EMBL" id="AK047854">
    <property type="protein sequence ID" value="BAC33175.1"/>
    <property type="molecule type" value="mRNA"/>
</dbReference>
<dbReference type="EMBL" id="CD350256">
    <property type="status" value="NOT_ANNOTATED_CDS"/>
    <property type="molecule type" value="mRNA"/>
</dbReference>
<dbReference type="EMBL" id="BQ770006">
    <property type="status" value="NOT_ANNOTATED_CDS"/>
    <property type="molecule type" value="mRNA"/>
</dbReference>
<dbReference type="CCDS" id="CCDS39719.1">
    <molecule id="Q7TMY7-1"/>
</dbReference>
<dbReference type="RefSeq" id="NP_001074582.1">
    <molecule id="Q7TMY7-1"/>
    <property type="nucleotide sequence ID" value="NM_001081113.2"/>
</dbReference>
<dbReference type="SMR" id="Q7TMY7"/>
<dbReference type="BioGRID" id="236248">
    <property type="interactions" value="3"/>
</dbReference>
<dbReference type="FunCoup" id="Q7TMY7">
    <property type="interactions" value="4455"/>
</dbReference>
<dbReference type="IntAct" id="Q7TMY7">
    <property type="interactions" value="2"/>
</dbReference>
<dbReference type="STRING" id="10090.ENSMUSP00000046759"/>
<dbReference type="iPTMnet" id="Q7TMY7"/>
<dbReference type="PhosphoSitePlus" id="Q7TMY7"/>
<dbReference type="SwissPalm" id="Q7TMY7"/>
<dbReference type="jPOST" id="Q7TMY7"/>
<dbReference type="PaxDb" id="10090-ENSMUSP00000046759"/>
<dbReference type="PeptideAtlas" id="Q7TMY7"/>
<dbReference type="ProteomicsDB" id="269084">
    <molecule id="Q7TMY7-1"/>
</dbReference>
<dbReference type="ProteomicsDB" id="269085">
    <molecule id="Q7TMY7-2"/>
</dbReference>
<dbReference type="Pumba" id="Q7TMY7"/>
<dbReference type="Antibodypedia" id="12794">
    <property type="antibodies" value="137 antibodies from 29 providers"/>
</dbReference>
<dbReference type="Ensembl" id="ENSMUST00000048418.14">
    <molecule id="Q7TMY7-1"/>
    <property type="protein sequence ID" value="ENSMUSP00000046759.8"/>
    <property type="gene ID" value="ENSMUSG00000040029.16"/>
</dbReference>
<dbReference type="GeneID" id="320727"/>
<dbReference type="KEGG" id="mmu:320727"/>
<dbReference type="UCSC" id="uc009etl.1">
    <molecule id="Q7TMY7-1"/>
    <property type="organism name" value="mouse"/>
</dbReference>
<dbReference type="UCSC" id="uc009etn.2">
    <molecule id="Q7TMY7-2"/>
    <property type="organism name" value="mouse"/>
</dbReference>
<dbReference type="AGR" id="MGI:2444611"/>
<dbReference type="CTD" id="10526"/>
<dbReference type="MGI" id="MGI:2444611">
    <property type="gene designation" value="Ipo8"/>
</dbReference>
<dbReference type="VEuPathDB" id="HostDB:ENSMUSG00000040029"/>
<dbReference type="eggNOG" id="KOG1991">
    <property type="taxonomic scope" value="Eukaryota"/>
</dbReference>
<dbReference type="GeneTree" id="ENSGT00940000158848"/>
<dbReference type="HOGENOM" id="CLU_004196_1_1_1"/>
<dbReference type="InParanoid" id="Q7TMY7"/>
<dbReference type="OMA" id="KNFEYRS"/>
<dbReference type="OrthoDB" id="760868at2759"/>
<dbReference type="PhylomeDB" id="Q7TMY7"/>
<dbReference type="TreeFam" id="TF300634"/>
<dbReference type="Reactome" id="R-MMU-5578749">
    <property type="pathway name" value="Transcriptional regulation by small RNAs"/>
</dbReference>
<dbReference type="BioGRID-ORCS" id="320727">
    <property type="hits" value="3 hits in 76 CRISPR screens"/>
</dbReference>
<dbReference type="ChiTaRS" id="Ipo8">
    <property type="organism name" value="mouse"/>
</dbReference>
<dbReference type="PRO" id="PR:Q7TMY7"/>
<dbReference type="Proteomes" id="UP000000589">
    <property type="component" value="Chromosome 6"/>
</dbReference>
<dbReference type="RNAct" id="Q7TMY7">
    <property type="molecule type" value="protein"/>
</dbReference>
<dbReference type="Bgee" id="ENSMUSG00000040029">
    <property type="expression patterns" value="Expressed in secondary oocyte and 256 other cell types or tissues"/>
</dbReference>
<dbReference type="ExpressionAtlas" id="Q7TMY7">
    <property type="expression patterns" value="baseline and differential"/>
</dbReference>
<dbReference type="GO" id="GO:0005737">
    <property type="term" value="C:cytoplasm"/>
    <property type="evidence" value="ECO:0007669"/>
    <property type="project" value="UniProtKB-SubCell"/>
</dbReference>
<dbReference type="GO" id="GO:0005634">
    <property type="term" value="C:nucleus"/>
    <property type="evidence" value="ECO:0007669"/>
    <property type="project" value="UniProtKB-SubCell"/>
</dbReference>
<dbReference type="GO" id="GO:0005886">
    <property type="term" value="C:plasma membrane"/>
    <property type="evidence" value="ECO:0000247"/>
    <property type="project" value="MGI"/>
</dbReference>
<dbReference type="GO" id="GO:0042626">
    <property type="term" value="F:ATPase-coupled transmembrane transporter activity"/>
    <property type="evidence" value="ECO:0000247"/>
    <property type="project" value="MGI"/>
</dbReference>
<dbReference type="GO" id="GO:0031267">
    <property type="term" value="F:small GTPase binding"/>
    <property type="evidence" value="ECO:0007669"/>
    <property type="project" value="InterPro"/>
</dbReference>
<dbReference type="GO" id="GO:0006886">
    <property type="term" value="P:intracellular protein transport"/>
    <property type="evidence" value="ECO:0007669"/>
    <property type="project" value="InterPro"/>
</dbReference>
<dbReference type="GO" id="GO:0006913">
    <property type="term" value="P:nucleocytoplasmic transport"/>
    <property type="evidence" value="ECO:0007669"/>
    <property type="project" value="UniProtKB-ARBA"/>
</dbReference>
<dbReference type="FunFam" id="1.25.10.10:FF:000053">
    <property type="entry name" value="Importin 7"/>
    <property type="match status" value="1"/>
</dbReference>
<dbReference type="Gene3D" id="1.25.10.10">
    <property type="entry name" value="Leucine-rich Repeat Variant"/>
    <property type="match status" value="1"/>
</dbReference>
<dbReference type="InterPro" id="IPR011989">
    <property type="entry name" value="ARM-like"/>
</dbReference>
<dbReference type="InterPro" id="IPR016024">
    <property type="entry name" value="ARM-type_fold"/>
</dbReference>
<dbReference type="InterPro" id="IPR001494">
    <property type="entry name" value="Importin-beta_N"/>
</dbReference>
<dbReference type="InterPro" id="IPR013713">
    <property type="entry name" value="XPO2_central"/>
</dbReference>
<dbReference type="PANTHER" id="PTHR10997">
    <property type="entry name" value="IMPORTIN-7, 8, 11"/>
    <property type="match status" value="1"/>
</dbReference>
<dbReference type="PANTHER" id="PTHR10997:SF26">
    <property type="entry name" value="IMPORTIN-8"/>
    <property type="match status" value="1"/>
</dbReference>
<dbReference type="Pfam" id="PF08506">
    <property type="entry name" value="Cse1"/>
    <property type="match status" value="1"/>
</dbReference>
<dbReference type="Pfam" id="PF03810">
    <property type="entry name" value="IBN_N"/>
    <property type="match status" value="1"/>
</dbReference>
<dbReference type="SMART" id="SM00913">
    <property type="entry name" value="IBN_N"/>
    <property type="match status" value="1"/>
</dbReference>
<dbReference type="SUPFAM" id="SSF48371">
    <property type="entry name" value="ARM repeat"/>
    <property type="match status" value="1"/>
</dbReference>
<dbReference type="PROSITE" id="PS50166">
    <property type="entry name" value="IMPORTIN_B_NT"/>
    <property type="match status" value="1"/>
</dbReference>
<organism>
    <name type="scientific">Mus musculus</name>
    <name type="common">Mouse</name>
    <dbReference type="NCBI Taxonomy" id="10090"/>
    <lineage>
        <taxon>Eukaryota</taxon>
        <taxon>Metazoa</taxon>
        <taxon>Chordata</taxon>
        <taxon>Craniata</taxon>
        <taxon>Vertebrata</taxon>
        <taxon>Euteleostomi</taxon>
        <taxon>Mammalia</taxon>
        <taxon>Eutheria</taxon>
        <taxon>Euarchontoglires</taxon>
        <taxon>Glires</taxon>
        <taxon>Rodentia</taxon>
        <taxon>Myomorpha</taxon>
        <taxon>Muroidea</taxon>
        <taxon>Muridae</taxon>
        <taxon>Murinae</taxon>
        <taxon>Mus</taxon>
        <taxon>Mus</taxon>
    </lineage>
</organism>
<name>IPO8_MOUSE</name>
<proteinExistence type="evidence at protein level"/>
<evidence type="ECO:0000250" key="1"/>
<evidence type="ECO:0000250" key="2">
    <source>
        <dbReference type="UniProtKB" id="O15397"/>
    </source>
</evidence>
<evidence type="ECO:0000255" key="3">
    <source>
        <dbReference type="PROSITE-ProRule" id="PRU00115"/>
    </source>
</evidence>
<evidence type="ECO:0000256" key="4">
    <source>
        <dbReference type="SAM" id="MobiDB-lite"/>
    </source>
</evidence>
<evidence type="ECO:0000269" key="5">
    <source>
    </source>
</evidence>
<evidence type="ECO:0000269" key="6">
    <source>
    </source>
</evidence>
<evidence type="ECO:0000303" key="7">
    <source>
    </source>
</evidence>
<evidence type="ECO:0000305" key="8"/>
<evidence type="ECO:0000312" key="9">
    <source>
        <dbReference type="MGI" id="MGI:2444611"/>
    </source>
</evidence>
<sequence length="1010" mass="117078">MDLNRIIQALKGTIDPKLRIAAETELNQSYKIINFAPSLLRIIVSDHVEFPVRQAAAIYLKNMVTQYWPDREPPPGEVIFPFNIHENDRQQIRDNIVEGIIRSPDLVRVQLTMCLRVIIRHDFPGHWPAVVDKIDYYLQSPNSGSWLGSLLCLYQLVKTYEYKKAEEREPLLAAMQIFLPRIQQQILQLLPDASHYSVLLQKQILKIFYALVQYALPLQLVNHQTMTTWMEIFRTIIDRTVPPETLQIDEDDRPELVWWKCKKWALHIVARLFERYGSPGNVTKEYFEFSEFFLKTYAVGIQQVLLKILDQYRQKEYIAPRVLQQAFNYLNQGVVHAVTWKQMKPHIQNISEDVIFSVMCYKDEDEELWQEDPYEYIRMKFDIFEDYASPTTAAQTLLYTAAKKRKEVLPKMMAFCYQILTDPNFDPRKKDGALHVIGSLAEILLKKSLFKDQIELFLQNHVFPLLMSNLGYLRARSCWVLHAFSSLKFHNELNLRNAVELAKKSLIEDEEMPVKVEAALALQSLISNQAQAKEHMKPYVRFIMQELLHIVRETENDDVTNVIQKLICEYSQDVASIAVDTTQHLAEIFGKVLQSDEYEEIEDKTVMAMGILHTIDTILTVVEDHPEIIQQLENICLRIIDLVLQKHVIEFYEEILSLAYNLTCHTISPQMWQLLGILYEVFQQDCFEYFTDMMPLLHNYVTVDTNALLSNPKHLEVLFTMCRKVLCGEAGEDAECYAAKLLEVIILQCKGRGIDQCIPLFIQLVLERLTRGVKTSELRTMCLQVAIAALYYSPELLFHTLEQVQLPHNPGPVTSQFINQWMNDTDYFLGHHDRKMCIIGLSVLLELQNRPPAVDAVAAQILPSILFLFLGLKQVCATRQTVNRENHSKAEKVDIEENEEISSEEEEETSVSAQAMQSQIGRSEEEDDDDWDEEVLEETALEGFSTPLDLDNSVDEYQFFTQALLTVQNRDAAWYQLLVAPLSEDQKRKLQEVYTLAEHRRTLAAGQFHI</sequence>
<protein>
    <recommendedName>
        <fullName evidence="9">Importin-8</fullName>
        <shortName>Imp8</shortName>
    </recommendedName>
    <alternativeName>
        <fullName>Ran-binding protein 8</fullName>
        <shortName evidence="9">RanBP8</shortName>
    </alternativeName>
</protein>
<comment type="function">
    <text evidence="2">Involved in nuclear protein import, either by acting as autonomous nuclear transport receptor or as an adapter-like protein in association with the importin-beta subunit KPNB1. Acting autonomously, may serve as receptor for nuclear localization signals (NLS) and promote translocation of import substrates through the nuclear pore complex (NPC) by an energy requiring, Ran-dependent mechanism. At the nucleoplasmic side of the NPC, Ran binds to importin, the importin/substrate complex dissociates and importin is re-exported from the nucleus to the cytoplasm where GTP hydrolysis releases Ran. The directionality of nuclear import is thought to be conferred by an asymmetric distribution of the GTP- and GDP-bound forms of Ran between the cytoplasm and nucleus. In vitro mediates the nuclear import of the signal recognition particle protein SRP19. May also be involved in cytoplasm-to-nucleus shuttling of a broad spectrum of other cargos, including Argonaute-microRNAs complexes, the JUN protein, RELA/NF-kappa-B p65 subunit, the translation initiation factor EIF4E and a set of receptor-activated mothers against decapentaplegic homolog (SMAD) transcription factors that play a critical role downstream of the large family of transforming growth factor beta and bone morphogenetic protein (BMP) cytokines.</text>
</comment>
<comment type="subunit">
    <text evidence="2">Forms a heterodimer with KPNB1. Interacts with SRP19. Interacts with RPL23A. Binds directly to nuclear pore complexes. Interacts with LRPPRC; the interaction occurs when LRPPRC is in its RNA-free form and promotes import of LRPPRC to the nucleus to allow for EIF4E-mediated export of mRNAS from the nucleus to the cytoplasm.</text>
</comment>
<comment type="subcellular location">
    <subcellularLocation>
        <location evidence="1">Cytoplasm</location>
    </subcellularLocation>
    <subcellularLocation>
        <location evidence="1">Nucleus</location>
    </subcellularLocation>
</comment>
<comment type="alternative products">
    <event type="alternative splicing"/>
    <isoform>
        <id>Q7TMY7-1</id>
        <name>1</name>
        <sequence type="displayed"/>
    </isoform>
    <isoform>
        <id>Q7TMY7-2</id>
        <name>2</name>
        <sequence type="described" ref="VSP_009656"/>
    </isoform>
</comment>
<comment type="developmental stage">
    <text evidence="6">Abundantly expressed in secretory and mature ameloblasts and weakly expressed in pre-ameloblasts of the lower incisor and molar at birth (at protein level).</text>
</comment>
<comment type="disruption phenotype">
    <text evidence="5">Knockout animals present with reduced grip strength and diminished vertical activity. Progressive dilatation can be observed in the aortic root at the level of the sinuses of Valsalva and distal ascending aorta, and aneurysms of the distal ascending aorta are becoming visible at the age of 8-12 weeks. Generally, males are more severely affected, exhibiting larger aortas and experiencing dissection and/or rupture more frequently than females.</text>
</comment>
<comment type="similarity">
    <text evidence="8">Belongs to the importin beta family.</text>
</comment>
<comment type="caution">
    <text evidence="8">The regions from 407 to 653 were deduced from the genomic sequence and ESTs by similarity to the human sequence.</text>
</comment>
<reference key="1">
    <citation type="journal article" date="2009" name="PLoS Biol.">
        <title>Lineage-specific biology revealed by a finished genome assembly of the mouse.</title>
        <authorList>
            <person name="Church D.M."/>
            <person name="Goodstadt L."/>
            <person name="Hillier L.W."/>
            <person name="Zody M.C."/>
            <person name="Goldstein S."/>
            <person name="She X."/>
            <person name="Bult C.J."/>
            <person name="Agarwala R."/>
            <person name="Cherry J.L."/>
            <person name="DiCuccio M."/>
            <person name="Hlavina W."/>
            <person name="Kapustin Y."/>
            <person name="Meric P."/>
            <person name="Maglott D."/>
            <person name="Birtle Z."/>
            <person name="Marques A.C."/>
            <person name="Graves T."/>
            <person name="Zhou S."/>
            <person name="Teague B."/>
            <person name="Potamousis K."/>
            <person name="Churas C."/>
            <person name="Place M."/>
            <person name="Herschleb J."/>
            <person name="Runnheim R."/>
            <person name="Forrest D."/>
            <person name="Amos-Landgraf J."/>
            <person name="Schwartz D.C."/>
            <person name="Cheng Z."/>
            <person name="Lindblad-Toh K."/>
            <person name="Eichler E.E."/>
            <person name="Ponting C.P."/>
        </authorList>
    </citation>
    <scope>NUCLEOTIDE SEQUENCE [LARGE SCALE GENOMIC DNA]</scope>
    <source>
        <strain>C57BL/6J</strain>
    </source>
</reference>
<reference key="2">
    <citation type="submission" date="2005-07" db="EMBL/GenBank/DDBJ databases">
        <authorList>
            <person name="Mural R.J."/>
            <person name="Adams M.D."/>
            <person name="Myers E.W."/>
            <person name="Smith H.O."/>
            <person name="Venter J.C."/>
        </authorList>
    </citation>
    <scope>NUCLEOTIDE SEQUENCE [LARGE SCALE GENOMIC DNA]</scope>
</reference>
<reference key="3">
    <citation type="journal article" date="2004" name="Genome Res.">
        <title>The status, quality, and expansion of the NIH full-length cDNA project: the Mammalian Gene Collection (MGC).</title>
        <authorList>
            <consortium name="The MGC Project Team"/>
        </authorList>
    </citation>
    <scope>NUCLEOTIDE SEQUENCE [LARGE SCALE MRNA] (ISOFORM 1)</scope>
    <scope>NUCLEOTIDE SEQUENCE [LARGE SCALE MRNA] OF 1-406 AND 654-1010 (ISOFORMS 1 AND 2)</scope>
    <source>
        <strain>FVB/N</strain>
        <strain>FVB/N-3</strain>
        <tissue>Brain</tissue>
        <tissue>Mammary tumor</tissue>
    </source>
</reference>
<reference key="4">
    <citation type="journal article" date="2005" name="Science">
        <title>The transcriptional landscape of the mammalian genome.</title>
        <authorList>
            <person name="Carninci P."/>
            <person name="Kasukawa T."/>
            <person name="Katayama S."/>
            <person name="Gough J."/>
            <person name="Frith M.C."/>
            <person name="Maeda N."/>
            <person name="Oyama R."/>
            <person name="Ravasi T."/>
            <person name="Lenhard B."/>
            <person name="Wells C."/>
            <person name="Kodzius R."/>
            <person name="Shimokawa K."/>
            <person name="Bajic V.B."/>
            <person name="Brenner S.E."/>
            <person name="Batalov S."/>
            <person name="Forrest A.R."/>
            <person name="Zavolan M."/>
            <person name="Davis M.J."/>
            <person name="Wilming L.G."/>
            <person name="Aidinis V."/>
            <person name="Allen J.E."/>
            <person name="Ambesi-Impiombato A."/>
            <person name="Apweiler R."/>
            <person name="Aturaliya R.N."/>
            <person name="Bailey T.L."/>
            <person name="Bansal M."/>
            <person name="Baxter L."/>
            <person name="Beisel K.W."/>
            <person name="Bersano T."/>
            <person name="Bono H."/>
            <person name="Chalk A.M."/>
            <person name="Chiu K.P."/>
            <person name="Choudhary V."/>
            <person name="Christoffels A."/>
            <person name="Clutterbuck D.R."/>
            <person name="Crowe M.L."/>
            <person name="Dalla E."/>
            <person name="Dalrymple B.P."/>
            <person name="de Bono B."/>
            <person name="Della Gatta G."/>
            <person name="di Bernardo D."/>
            <person name="Down T."/>
            <person name="Engstrom P."/>
            <person name="Fagiolini M."/>
            <person name="Faulkner G."/>
            <person name="Fletcher C.F."/>
            <person name="Fukushima T."/>
            <person name="Furuno M."/>
            <person name="Futaki S."/>
            <person name="Gariboldi M."/>
            <person name="Georgii-Hemming P."/>
            <person name="Gingeras T.R."/>
            <person name="Gojobori T."/>
            <person name="Green R.E."/>
            <person name="Gustincich S."/>
            <person name="Harbers M."/>
            <person name="Hayashi Y."/>
            <person name="Hensch T.K."/>
            <person name="Hirokawa N."/>
            <person name="Hill D."/>
            <person name="Huminiecki L."/>
            <person name="Iacono M."/>
            <person name="Ikeo K."/>
            <person name="Iwama A."/>
            <person name="Ishikawa T."/>
            <person name="Jakt M."/>
            <person name="Kanapin A."/>
            <person name="Katoh M."/>
            <person name="Kawasawa Y."/>
            <person name="Kelso J."/>
            <person name="Kitamura H."/>
            <person name="Kitano H."/>
            <person name="Kollias G."/>
            <person name="Krishnan S.P."/>
            <person name="Kruger A."/>
            <person name="Kummerfeld S.K."/>
            <person name="Kurochkin I.V."/>
            <person name="Lareau L.F."/>
            <person name="Lazarevic D."/>
            <person name="Lipovich L."/>
            <person name="Liu J."/>
            <person name="Liuni S."/>
            <person name="McWilliam S."/>
            <person name="Madan Babu M."/>
            <person name="Madera M."/>
            <person name="Marchionni L."/>
            <person name="Matsuda H."/>
            <person name="Matsuzawa S."/>
            <person name="Miki H."/>
            <person name="Mignone F."/>
            <person name="Miyake S."/>
            <person name="Morris K."/>
            <person name="Mottagui-Tabar S."/>
            <person name="Mulder N."/>
            <person name="Nakano N."/>
            <person name="Nakauchi H."/>
            <person name="Ng P."/>
            <person name="Nilsson R."/>
            <person name="Nishiguchi S."/>
            <person name="Nishikawa S."/>
            <person name="Nori F."/>
            <person name="Ohara O."/>
            <person name="Okazaki Y."/>
            <person name="Orlando V."/>
            <person name="Pang K.C."/>
            <person name="Pavan W.J."/>
            <person name="Pavesi G."/>
            <person name="Pesole G."/>
            <person name="Petrovsky N."/>
            <person name="Piazza S."/>
            <person name="Reed J."/>
            <person name="Reid J.F."/>
            <person name="Ring B.Z."/>
            <person name="Ringwald M."/>
            <person name="Rost B."/>
            <person name="Ruan Y."/>
            <person name="Salzberg S.L."/>
            <person name="Sandelin A."/>
            <person name="Schneider C."/>
            <person name="Schoenbach C."/>
            <person name="Sekiguchi K."/>
            <person name="Semple C.A."/>
            <person name="Seno S."/>
            <person name="Sessa L."/>
            <person name="Sheng Y."/>
            <person name="Shibata Y."/>
            <person name="Shimada H."/>
            <person name="Shimada K."/>
            <person name="Silva D."/>
            <person name="Sinclair B."/>
            <person name="Sperling S."/>
            <person name="Stupka E."/>
            <person name="Sugiura K."/>
            <person name="Sultana R."/>
            <person name="Takenaka Y."/>
            <person name="Taki K."/>
            <person name="Tammoja K."/>
            <person name="Tan S.L."/>
            <person name="Tang S."/>
            <person name="Taylor M.S."/>
            <person name="Tegner J."/>
            <person name="Teichmann S.A."/>
            <person name="Ueda H.R."/>
            <person name="van Nimwegen E."/>
            <person name="Verardo R."/>
            <person name="Wei C.L."/>
            <person name="Yagi K."/>
            <person name="Yamanishi H."/>
            <person name="Zabarovsky E."/>
            <person name="Zhu S."/>
            <person name="Zimmer A."/>
            <person name="Hide W."/>
            <person name="Bult C."/>
            <person name="Grimmond S.M."/>
            <person name="Teasdale R.D."/>
            <person name="Liu E.T."/>
            <person name="Brusic V."/>
            <person name="Quackenbush J."/>
            <person name="Wahlestedt C."/>
            <person name="Mattick J.S."/>
            <person name="Hume D.A."/>
            <person name="Kai C."/>
            <person name="Sasaki D."/>
            <person name="Tomaru Y."/>
            <person name="Fukuda S."/>
            <person name="Kanamori-Katayama M."/>
            <person name="Suzuki M."/>
            <person name="Aoki J."/>
            <person name="Arakawa T."/>
            <person name="Iida J."/>
            <person name="Imamura K."/>
            <person name="Itoh M."/>
            <person name="Kato T."/>
            <person name="Kawaji H."/>
            <person name="Kawagashira N."/>
            <person name="Kawashima T."/>
            <person name="Kojima M."/>
            <person name="Kondo S."/>
            <person name="Konno H."/>
            <person name="Nakano K."/>
            <person name="Ninomiya N."/>
            <person name="Nishio T."/>
            <person name="Okada M."/>
            <person name="Plessy C."/>
            <person name="Shibata K."/>
            <person name="Shiraki T."/>
            <person name="Suzuki S."/>
            <person name="Tagami M."/>
            <person name="Waki K."/>
            <person name="Watahiki A."/>
            <person name="Okamura-Oho Y."/>
            <person name="Suzuki H."/>
            <person name="Kawai J."/>
            <person name="Hayashizaki Y."/>
        </authorList>
    </citation>
    <scope>NUCLEOTIDE SEQUENCE [LARGE SCALE MRNA] OF 71-401 (ISOFORM 1)</scope>
    <source>
        <strain>C57BL/6J</strain>
        <tissue>Head</tissue>
    </source>
</reference>
<reference key="5">
    <citation type="submission" date="2003-07" db="EMBL/GenBank/DDBJ databases">
        <authorList>
            <consortium name="The MGC Project Team"/>
        </authorList>
    </citation>
    <scope>NUCLEOTIDE SEQUENCE [MRNA] OF 407-653</scope>
</reference>
<reference key="6">
    <citation type="unpublished observations" date="2004-01">
        <authorList>
            <person name="Argoud-Puy G."/>
        </authorList>
    </citation>
    <scope>RECONSTRUCTION FROM ESTS</scope>
    <scope>CONCEPTUAL TRANSLATION OF 407-653</scope>
</reference>
<reference key="7">
    <citation type="journal article" date="2007" name="Proc. Natl. Acad. Sci. U.S.A.">
        <title>Large-scale phosphorylation analysis of mouse liver.</title>
        <authorList>
            <person name="Villen J."/>
            <person name="Beausoleil S.A."/>
            <person name="Gerber S.A."/>
            <person name="Gygi S.P."/>
        </authorList>
    </citation>
    <scope>IDENTIFICATION BY MASS SPECTROMETRY [LARGE SCALE ANALYSIS]</scope>
    <source>
        <tissue>Liver</tissue>
    </source>
</reference>
<reference key="8">
    <citation type="journal article" date="2010" name="Cell">
        <title>A tissue-specific atlas of mouse protein phosphorylation and expression.</title>
        <authorList>
            <person name="Huttlin E.L."/>
            <person name="Jedrychowski M.P."/>
            <person name="Elias J.E."/>
            <person name="Goswami T."/>
            <person name="Rad R."/>
            <person name="Beausoleil S.A."/>
            <person name="Villen J."/>
            <person name="Haas W."/>
            <person name="Sowa M.E."/>
            <person name="Gygi S.P."/>
        </authorList>
    </citation>
    <scope>IDENTIFICATION BY MASS SPECTROMETRY [LARGE SCALE ANALYSIS]</scope>
    <source>
        <tissue>Kidney</tissue>
        <tissue>Liver</tissue>
        <tissue>Lung</tissue>
        <tissue>Spleen</tissue>
        <tissue>Testis</tissue>
    </source>
</reference>
<reference key="9">
    <citation type="journal article" date="2021" name="Am. J. Hum. Genet.">
        <title>A human importin-beta-related disorder: Syndromic thoracic aortic aneurysm caused by bi-allelic loss-of-function variants in IPO8.</title>
        <authorList>
            <consortium name="Genomics England Research Consortium"/>
            <person name="Van Gucht I."/>
            <person name="Meester J.A.N."/>
            <person name="Bento J.R."/>
            <person name="Bastiaansen M."/>
            <person name="Bastianen J."/>
            <person name="Luyckx I."/>
            <person name="Van Den Heuvel L."/>
            <person name="Neutel C.H.G."/>
            <person name="Guns P.J."/>
            <person name="Vermont M."/>
            <person name="Fransen E."/>
            <person name="Perik M.H.A.M."/>
            <person name="Velchev J.D."/>
            <person name="Alaerts M."/>
            <person name="Schepers D."/>
            <person name="Peeters S."/>
            <person name="Pintelon I."/>
            <person name="Almesned A."/>
            <person name="Ferla M.P."/>
            <person name="Taylor J.C."/>
            <person name="Dallosso A.R."/>
            <person name="Williams M."/>
            <person name="Evans J."/>
            <person name="Rosenfeld J.A."/>
            <person name="Sluysmans T."/>
            <person name="Rodrigues D."/>
            <person name="Chikermane A."/>
            <person name="Bharmappanavara G."/>
            <person name="Vijayakumar K."/>
            <person name="Mottaghi Moghaddam Shahri H."/>
            <person name="Hashemi N."/>
            <person name="Torbati P.N."/>
            <person name="Toosi M.B."/>
            <person name="Al-Hassnan Z.N."/>
            <person name="Vogt J."/>
            <person name="Revencu N."/>
            <person name="Maystadt I."/>
            <person name="Miller E.M."/>
            <person name="Weaver K.N."/>
            <person name="Begtrup A."/>
            <person name="Houlden H."/>
            <person name="Murphy D."/>
            <person name="Maroofian R."/>
            <person name="Pagnamenta A.T."/>
            <person name="Van Laer L."/>
            <person name="Loeys B.L."/>
            <person name="Verstraeten A."/>
        </authorList>
    </citation>
    <scope>DISRUPTION PHENOTYPE</scope>
</reference>
<reference key="10">
    <citation type="journal article" date="2022" name="Stem Cells">
        <title>IPO7 Promotes Odontoblastic Differentiation and Inhibits Osteoblastic Differentiation Through Regulation of RUNX2 Expression and Translocation.</title>
        <authorList>
            <person name="Zhang Y."/>
            <person name="Zhang H."/>
            <person name="Xiao Z."/>
            <person name="Yuan G."/>
            <person name="Yang G."/>
        </authorList>
    </citation>
    <scope>DEVELOPMENTAL STAGE</scope>
</reference>
<gene>
    <name evidence="9" type="primary">Ipo8</name>
</gene>
<accession>Q7TMY7</accession>
<accession>B2KGD8</accession>
<accession>Q811I3</accession>
<accession>Q8C8A9</accession>
<accession>Q8R2P6</accession>
<accession>Q8R3V7</accession>